<accession>A1WRL1</accession>
<keyword id="KW-0131">Cell cycle</keyword>
<keyword id="KW-0132">Cell division</keyword>
<keyword id="KW-0997">Cell inner membrane</keyword>
<keyword id="KW-1003">Cell membrane</keyword>
<keyword id="KW-0133">Cell shape</keyword>
<keyword id="KW-0961">Cell wall biogenesis/degradation</keyword>
<keyword id="KW-0328">Glycosyltransferase</keyword>
<keyword id="KW-0472">Membrane</keyword>
<keyword id="KW-0573">Peptidoglycan synthesis</keyword>
<keyword id="KW-1185">Reference proteome</keyword>
<keyword id="KW-0808">Transferase</keyword>
<protein>
    <recommendedName>
        <fullName evidence="1">UDP-N-acetylglucosamine--N-acetylmuramyl-(pentapeptide) pyrophosphoryl-undecaprenol N-acetylglucosamine transferase</fullName>
        <ecNumber evidence="1">2.4.1.227</ecNumber>
    </recommendedName>
    <alternativeName>
        <fullName evidence="1">Undecaprenyl-PP-MurNAc-pentapeptide-UDPGlcNAc GlcNAc transferase</fullName>
    </alternativeName>
</protein>
<dbReference type="EC" id="2.4.1.227" evidence="1"/>
<dbReference type="EMBL" id="CP000542">
    <property type="protein sequence ID" value="ABM60268.1"/>
    <property type="molecule type" value="Genomic_DNA"/>
</dbReference>
<dbReference type="RefSeq" id="WP_011812252.1">
    <property type="nucleotide sequence ID" value="NC_008786.1"/>
</dbReference>
<dbReference type="SMR" id="A1WRL1"/>
<dbReference type="STRING" id="391735.Veis_4570"/>
<dbReference type="CAZy" id="GT28">
    <property type="family name" value="Glycosyltransferase Family 28"/>
</dbReference>
<dbReference type="GeneID" id="76462863"/>
<dbReference type="KEGG" id="vei:Veis_4570"/>
<dbReference type="eggNOG" id="COG0707">
    <property type="taxonomic scope" value="Bacteria"/>
</dbReference>
<dbReference type="HOGENOM" id="CLU_037404_2_0_4"/>
<dbReference type="OrthoDB" id="9808936at2"/>
<dbReference type="UniPathway" id="UPA00219"/>
<dbReference type="Proteomes" id="UP000000374">
    <property type="component" value="Chromosome"/>
</dbReference>
<dbReference type="GO" id="GO:0005886">
    <property type="term" value="C:plasma membrane"/>
    <property type="evidence" value="ECO:0007669"/>
    <property type="project" value="UniProtKB-SubCell"/>
</dbReference>
<dbReference type="GO" id="GO:0051991">
    <property type="term" value="F:UDP-N-acetyl-D-glucosamine:N-acetylmuramoyl-L-alanyl-D-glutamyl-meso-2,6-diaminopimelyl-D-alanyl-D-alanine-diphosphoundecaprenol 4-beta-N-acetylglucosaminlytransferase activity"/>
    <property type="evidence" value="ECO:0007669"/>
    <property type="project" value="RHEA"/>
</dbReference>
<dbReference type="GO" id="GO:0050511">
    <property type="term" value="F:undecaprenyldiphospho-muramoylpentapeptide beta-N-acetylglucosaminyltransferase activity"/>
    <property type="evidence" value="ECO:0007669"/>
    <property type="project" value="UniProtKB-UniRule"/>
</dbReference>
<dbReference type="GO" id="GO:0005975">
    <property type="term" value="P:carbohydrate metabolic process"/>
    <property type="evidence" value="ECO:0007669"/>
    <property type="project" value="InterPro"/>
</dbReference>
<dbReference type="GO" id="GO:0051301">
    <property type="term" value="P:cell division"/>
    <property type="evidence" value="ECO:0007669"/>
    <property type="project" value="UniProtKB-KW"/>
</dbReference>
<dbReference type="GO" id="GO:0071555">
    <property type="term" value="P:cell wall organization"/>
    <property type="evidence" value="ECO:0007669"/>
    <property type="project" value="UniProtKB-KW"/>
</dbReference>
<dbReference type="GO" id="GO:0030259">
    <property type="term" value="P:lipid glycosylation"/>
    <property type="evidence" value="ECO:0007669"/>
    <property type="project" value="UniProtKB-UniRule"/>
</dbReference>
<dbReference type="GO" id="GO:0009252">
    <property type="term" value="P:peptidoglycan biosynthetic process"/>
    <property type="evidence" value="ECO:0007669"/>
    <property type="project" value="UniProtKB-UniRule"/>
</dbReference>
<dbReference type="GO" id="GO:0008360">
    <property type="term" value="P:regulation of cell shape"/>
    <property type="evidence" value="ECO:0007669"/>
    <property type="project" value="UniProtKB-KW"/>
</dbReference>
<dbReference type="CDD" id="cd03785">
    <property type="entry name" value="GT28_MurG"/>
    <property type="match status" value="1"/>
</dbReference>
<dbReference type="Gene3D" id="3.40.50.2000">
    <property type="entry name" value="Glycogen Phosphorylase B"/>
    <property type="match status" value="2"/>
</dbReference>
<dbReference type="HAMAP" id="MF_00033">
    <property type="entry name" value="MurG"/>
    <property type="match status" value="1"/>
</dbReference>
<dbReference type="InterPro" id="IPR006009">
    <property type="entry name" value="GlcNAc_MurG"/>
</dbReference>
<dbReference type="InterPro" id="IPR007235">
    <property type="entry name" value="Glyco_trans_28_C"/>
</dbReference>
<dbReference type="InterPro" id="IPR004276">
    <property type="entry name" value="GlycoTrans_28_N"/>
</dbReference>
<dbReference type="NCBIfam" id="TIGR01133">
    <property type="entry name" value="murG"/>
    <property type="match status" value="1"/>
</dbReference>
<dbReference type="PANTHER" id="PTHR21015:SF22">
    <property type="entry name" value="GLYCOSYLTRANSFERASE"/>
    <property type="match status" value="1"/>
</dbReference>
<dbReference type="PANTHER" id="PTHR21015">
    <property type="entry name" value="UDP-N-ACETYLGLUCOSAMINE--N-ACETYLMURAMYL-(PENTAPEPTIDE) PYROPHOSPHORYL-UNDECAPRENOL N-ACETYLGLUCOSAMINE TRANSFERASE 1"/>
    <property type="match status" value="1"/>
</dbReference>
<dbReference type="Pfam" id="PF04101">
    <property type="entry name" value="Glyco_tran_28_C"/>
    <property type="match status" value="1"/>
</dbReference>
<dbReference type="Pfam" id="PF03033">
    <property type="entry name" value="Glyco_transf_28"/>
    <property type="match status" value="1"/>
</dbReference>
<dbReference type="SUPFAM" id="SSF53756">
    <property type="entry name" value="UDP-Glycosyltransferase/glycogen phosphorylase"/>
    <property type="match status" value="1"/>
</dbReference>
<comment type="function">
    <text evidence="1">Cell wall formation. Catalyzes the transfer of a GlcNAc subunit on undecaprenyl-pyrophosphoryl-MurNAc-pentapeptide (lipid intermediate I) to form undecaprenyl-pyrophosphoryl-MurNAc-(pentapeptide)GlcNAc (lipid intermediate II).</text>
</comment>
<comment type="catalytic activity">
    <reaction evidence="1">
        <text>di-trans,octa-cis-undecaprenyl diphospho-N-acetyl-alpha-D-muramoyl-L-alanyl-D-glutamyl-meso-2,6-diaminopimeloyl-D-alanyl-D-alanine + UDP-N-acetyl-alpha-D-glucosamine = di-trans,octa-cis-undecaprenyl diphospho-[N-acetyl-alpha-D-glucosaminyl-(1-&gt;4)]-N-acetyl-alpha-D-muramoyl-L-alanyl-D-glutamyl-meso-2,6-diaminopimeloyl-D-alanyl-D-alanine + UDP + H(+)</text>
        <dbReference type="Rhea" id="RHEA:31227"/>
        <dbReference type="ChEBI" id="CHEBI:15378"/>
        <dbReference type="ChEBI" id="CHEBI:57705"/>
        <dbReference type="ChEBI" id="CHEBI:58223"/>
        <dbReference type="ChEBI" id="CHEBI:61387"/>
        <dbReference type="ChEBI" id="CHEBI:61388"/>
        <dbReference type="EC" id="2.4.1.227"/>
    </reaction>
</comment>
<comment type="pathway">
    <text evidence="1">Cell wall biogenesis; peptidoglycan biosynthesis.</text>
</comment>
<comment type="subcellular location">
    <subcellularLocation>
        <location evidence="1">Cell inner membrane</location>
        <topology evidence="1">Peripheral membrane protein</topology>
        <orientation evidence="1">Cytoplasmic side</orientation>
    </subcellularLocation>
</comment>
<comment type="similarity">
    <text evidence="1">Belongs to the glycosyltransferase 28 family. MurG subfamily.</text>
</comment>
<organism>
    <name type="scientific">Verminephrobacter eiseniae (strain EF01-2)</name>
    <dbReference type="NCBI Taxonomy" id="391735"/>
    <lineage>
        <taxon>Bacteria</taxon>
        <taxon>Pseudomonadati</taxon>
        <taxon>Pseudomonadota</taxon>
        <taxon>Betaproteobacteria</taxon>
        <taxon>Burkholderiales</taxon>
        <taxon>Comamonadaceae</taxon>
        <taxon>Verminephrobacter</taxon>
    </lineage>
</organism>
<feature type="chain" id="PRO_0000315198" description="UDP-N-acetylglucosamine--N-acetylmuramyl-(pentapeptide) pyrophosphoryl-undecaprenol N-acetylglucosamine transferase">
    <location>
        <begin position="1"/>
        <end position="359"/>
    </location>
</feature>
<feature type="binding site" evidence="1">
    <location>
        <begin position="14"/>
        <end position="16"/>
    </location>
    <ligand>
        <name>UDP-N-acetyl-alpha-D-glucosamine</name>
        <dbReference type="ChEBI" id="CHEBI:57705"/>
    </ligand>
</feature>
<feature type="binding site" evidence="1">
    <location>
        <position position="126"/>
    </location>
    <ligand>
        <name>UDP-N-acetyl-alpha-D-glucosamine</name>
        <dbReference type="ChEBI" id="CHEBI:57705"/>
    </ligand>
</feature>
<feature type="binding site" evidence="1">
    <location>
        <position position="166"/>
    </location>
    <ligand>
        <name>UDP-N-acetyl-alpha-D-glucosamine</name>
        <dbReference type="ChEBI" id="CHEBI:57705"/>
    </ligand>
</feature>
<feature type="binding site" evidence="1">
    <location>
        <position position="194"/>
    </location>
    <ligand>
        <name>UDP-N-acetyl-alpha-D-glucosamine</name>
        <dbReference type="ChEBI" id="CHEBI:57705"/>
    </ligand>
</feature>
<feature type="binding site" evidence="1">
    <location>
        <position position="248"/>
    </location>
    <ligand>
        <name>UDP-N-acetyl-alpha-D-glucosamine</name>
        <dbReference type="ChEBI" id="CHEBI:57705"/>
    </ligand>
</feature>
<feature type="binding site" evidence="1">
    <location>
        <position position="293"/>
    </location>
    <ligand>
        <name>UDP-N-acetyl-alpha-D-glucosamine</name>
        <dbReference type="ChEBI" id="CHEBI:57705"/>
    </ligand>
</feature>
<gene>
    <name evidence="1" type="primary">murG</name>
    <name type="ordered locus">Veis_4570</name>
</gene>
<name>MURG_VEREI</name>
<reference key="1">
    <citation type="submission" date="2006-12" db="EMBL/GenBank/DDBJ databases">
        <title>Complete sequence of chromosome 1 of Verminephrobacter eiseniae EF01-2.</title>
        <authorList>
            <person name="Copeland A."/>
            <person name="Lucas S."/>
            <person name="Lapidus A."/>
            <person name="Barry K."/>
            <person name="Detter J.C."/>
            <person name="Glavina del Rio T."/>
            <person name="Dalin E."/>
            <person name="Tice H."/>
            <person name="Pitluck S."/>
            <person name="Chertkov O."/>
            <person name="Brettin T."/>
            <person name="Bruce D."/>
            <person name="Han C."/>
            <person name="Tapia R."/>
            <person name="Gilna P."/>
            <person name="Schmutz J."/>
            <person name="Larimer F."/>
            <person name="Land M."/>
            <person name="Hauser L."/>
            <person name="Kyrpides N."/>
            <person name="Kim E."/>
            <person name="Stahl D."/>
            <person name="Richardson P."/>
        </authorList>
    </citation>
    <scope>NUCLEOTIDE SEQUENCE [LARGE SCALE GENOMIC DNA]</scope>
    <source>
        <strain>EF01-2</strain>
    </source>
</reference>
<sequence>MTGSKTALIMAGGTGGHIFPGLAVAEALRARGWRVHWLGAPASMEARIAAQHGFALESVTFSGVRGKGLATLALLPLRLLRAFWQARAVLRRVQPDVLVGLGGYISFPGALMGLLRRKPLVLHEQNAVAGLANRLLAGRADRVFAAFPGAFGSAAPKARWVGNPLRAAFTQQAGPAERFAARTGPLQLLVMGGSLGARALNELVPQALALLPAAQRPQVLHQSGATQIEALRAHYAAAGVQAELRPFIDDVACALAAADVIVCRAGASTVSEIAAVGAAALFVPLPSAVDDHQTRNARWLVDAGGGWLLPQHELSPRGLAQMLSNLERPALLDKALKAHAMQKTSATQELVGACEELAA</sequence>
<proteinExistence type="inferred from homology"/>
<evidence type="ECO:0000255" key="1">
    <source>
        <dbReference type="HAMAP-Rule" id="MF_00033"/>
    </source>
</evidence>